<accession>O34516</accession>
<accession>Q796D1</accession>
<gene>
    <name type="primary">yocB</name>
    <name type="ordered locus">BSU19150</name>
</gene>
<dbReference type="EMBL" id="AF027868">
    <property type="protein sequence ID" value="AAB84473.1"/>
    <property type="molecule type" value="Genomic_DNA"/>
</dbReference>
<dbReference type="EMBL" id="AL009126">
    <property type="protein sequence ID" value="CAB13807.1"/>
    <property type="molecule type" value="Genomic_DNA"/>
</dbReference>
<dbReference type="PIR" id="G69900">
    <property type="entry name" value="G69900"/>
</dbReference>
<dbReference type="RefSeq" id="NP_389796.1">
    <property type="nucleotide sequence ID" value="NC_000964.3"/>
</dbReference>
<dbReference type="RefSeq" id="WP_004399450.1">
    <property type="nucleotide sequence ID" value="NZ_OZ025638.1"/>
</dbReference>
<dbReference type="SMR" id="O34516"/>
<dbReference type="FunCoup" id="O34516">
    <property type="interactions" value="28"/>
</dbReference>
<dbReference type="STRING" id="224308.BSU19150"/>
<dbReference type="PaxDb" id="224308-BSU19150"/>
<dbReference type="EnsemblBacteria" id="CAB13807">
    <property type="protein sequence ID" value="CAB13807"/>
    <property type="gene ID" value="BSU_19150"/>
</dbReference>
<dbReference type="GeneID" id="939442"/>
<dbReference type="KEGG" id="bsu:BSU19150"/>
<dbReference type="PATRIC" id="fig|224308.179.peg.2093"/>
<dbReference type="eggNOG" id="ENOG502ZV2Y">
    <property type="taxonomic scope" value="Bacteria"/>
</dbReference>
<dbReference type="InParanoid" id="O34516"/>
<dbReference type="OrthoDB" id="5241360at2"/>
<dbReference type="BioCyc" id="BSUB:BSU19150-MONOMER"/>
<dbReference type="Proteomes" id="UP000001570">
    <property type="component" value="Chromosome"/>
</dbReference>
<dbReference type="InterPro" id="IPR040983">
    <property type="entry name" value="Bact_RF_family5"/>
</dbReference>
<dbReference type="Pfam" id="PF18846">
    <property type="entry name" value="baeRF_family5"/>
    <property type="match status" value="1"/>
</dbReference>
<name>YOCB_BACSU</name>
<proteinExistence type="predicted"/>
<keyword id="KW-1185">Reference proteome</keyword>
<organism>
    <name type="scientific">Bacillus subtilis (strain 168)</name>
    <dbReference type="NCBI Taxonomy" id="224308"/>
    <lineage>
        <taxon>Bacteria</taxon>
        <taxon>Bacillati</taxon>
        <taxon>Bacillota</taxon>
        <taxon>Bacilli</taxon>
        <taxon>Bacillales</taxon>
        <taxon>Bacillaceae</taxon>
        <taxon>Bacillus</taxon>
    </lineage>
</organism>
<reference key="1">
    <citation type="submission" date="1997-10" db="EMBL/GenBank/DDBJ databases">
        <title>Sequence analysis of the Bacillus subtilis chromosome region between the terC and odhAB loci cloned in a yeast artificial chromosome.</title>
        <authorList>
            <person name="Lapidus A."/>
            <person name="Galleron N."/>
            <person name="Sorokin A."/>
            <person name="Ehrlich S.D."/>
        </authorList>
    </citation>
    <scope>NUCLEOTIDE SEQUENCE [GENOMIC DNA]</scope>
</reference>
<reference key="2">
    <citation type="journal article" date="1997" name="Nature">
        <title>The complete genome sequence of the Gram-positive bacterium Bacillus subtilis.</title>
        <authorList>
            <person name="Kunst F."/>
            <person name="Ogasawara N."/>
            <person name="Moszer I."/>
            <person name="Albertini A.M."/>
            <person name="Alloni G."/>
            <person name="Azevedo V."/>
            <person name="Bertero M.G."/>
            <person name="Bessieres P."/>
            <person name="Bolotin A."/>
            <person name="Borchert S."/>
            <person name="Borriss R."/>
            <person name="Boursier L."/>
            <person name="Brans A."/>
            <person name="Braun M."/>
            <person name="Brignell S.C."/>
            <person name="Bron S."/>
            <person name="Brouillet S."/>
            <person name="Bruschi C.V."/>
            <person name="Caldwell B."/>
            <person name="Capuano V."/>
            <person name="Carter N.M."/>
            <person name="Choi S.-K."/>
            <person name="Codani J.-J."/>
            <person name="Connerton I.F."/>
            <person name="Cummings N.J."/>
            <person name="Daniel R.A."/>
            <person name="Denizot F."/>
            <person name="Devine K.M."/>
            <person name="Duesterhoeft A."/>
            <person name="Ehrlich S.D."/>
            <person name="Emmerson P.T."/>
            <person name="Entian K.-D."/>
            <person name="Errington J."/>
            <person name="Fabret C."/>
            <person name="Ferrari E."/>
            <person name="Foulger D."/>
            <person name="Fritz C."/>
            <person name="Fujita M."/>
            <person name="Fujita Y."/>
            <person name="Fuma S."/>
            <person name="Galizzi A."/>
            <person name="Galleron N."/>
            <person name="Ghim S.-Y."/>
            <person name="Glaser P."/>
            <person name="Goffeau A."/>
            <person name="Golightly E.J."/>
            <person name="Grandi G."/>
            <person name="Guiseppi G."/>
            <person name="Guy B.J."/>
            <person name="Haga K."/>
            <person name="Haiech J."/>
            <person name="Harwood C.R."/>
            <person name="Henaut A."/>
            <person name="Hilbert H."/>
            <person name="Holsappel S."/>
            <person name="Hosono S."/>
            <person name="Hullo M.-F."/>
            <person name="Itaya M."/>
            <person name="Jones L.-M."/>
            <person name="Joris B."/>
            <person name="Karamata D."/>
            <person name="Kasahara Y."/>
            <person name="Klaerr-Blanchard M."/>
            <person name="Klein C."/>
            <person name="Kobayashi Y."/>
            <person name="Koetter P."/>
            <person name="Koningstein G."/>
            <person name="Krogh S."/>
            <person name="Kumano M."/>
            <person name="Kurita K."/>
            <person name="Lapidus A."/>
            <person name="Lardinois S."/>
            <person name="Lauber J."/>
            <person name="Lazarevic V."/>
            <person name="Lee S.-M."/>
            <person name="Levine A."/>
            <person name="Liu H."/>
            <person name="Masuda S."/>
            <person name="Mauel C."/>
            <person name="Medigue C."/>
            <person name="Medina N."/>
            <person name="Mellado R.P."/>
            <person name="Mizuno M."/>
            <person name="Moestl D."/>
            <person name="Nakai S."/>
            <person name="Noback M."/>
            <person name="Noone D."/>
            <person name="O'Reilly M."/>
            <person name="Ogawa K."/>
            <person name="Ogiwara A."/>
            <person name="Oudega B."/>
            <person name="Park S.-H."/>
            <person name="Parro V."/>
            <person name="Pohl T.M."/>
            <person name="Portetelle D."/>
            <person name="Porwollik S."/>
            <person name="Prescott A.M."/>
            <person name="Presecan E."/>
            <person name="Pujic P."/>
            <person name="Purnelle B."/>
            <person name="Rapoport G."/>
            <person name="Rey M."/>
            <person name="Reynolds S."/>
            <person name="Rieger M."/>
            <person name="Rivolta C."/>
            <person name="Rocha E."/>
            <person name="Roche B."/>
            <person name="Rose M."/>
            <person name="Sadaie Y."/>
            <person name="Sato T."/>
            <person name="Scanlan E."/>
            <person name="Schleich S."/>
            <person name="Schroeter R."/>
            <person name="Scoffone F."/>
            <person name="Sekiguchi J."/>
            <person name="Sekowska A."/>
            <person name="Seror S.J."/>
            <person name="Serror P."/>
            <person name="Shin B.-S."/>
            <person name="Soldo B."/>
            <person name="Sorokin A."/>
            <person name="Tacconi E."/>
            <person name="Takagi T."/>
            <person name="Takahashi H."/>
            <person name="Takemaru K."/>
            <person name="Takeuchi M."/>
            <person name="Tamakoshi A."/>
            <person name="Tanaka T."/>
            <person name="Terpstra P."/>
            <person name="Tognoni A."/>
            <person name="Tosato V."/>
            <person name="Uchiyama S."/>
            <person name="Vandenbol M."/>
            <person name="Vannier F."/>
            <person name="Vassarotti A."/>
            <person name="Viari A."/>
            <person name="Wambutt R."/>
            <person name="Wedler E."/>
            <person name="Wedler H."/>
            <person name="Weitzenegger T."/>
            <person name="Winters P."/>
            <person name="Wipat A."/>
            <person name="Yamamoto H."/>
            <person name="Yamane K."/>
            <person name="Yasumoto K."/>
            <person name="Yata K."/>
            <person name="Yoshida K."/>
            <person name="Yoshikawa H.-F."/>
            <person name="Zumstein E."/>
            <person name="Yoshikawa H."/>
            <person name="Danchin A."/>
        </authorList>
    </citation>
    <scope>NUCLEOTIDE SEQUENCE [LARGE SCALE GENOMIC DNA]</scope>
    <source>
        <strain>168</strain>
    </source>
</reference>
<sequence length="260" mass="30187">MAIDSLINKLQYVQLEPPDKILSLYLNTDMRDPEQQGGEWKIALKSGFSRLKEYLAASDPEEEKCLDGIRAKMNQYLNAMGKDMPRSLVFFVSDSGIWEPIKLQVPVDTRFYWEETAVLDQLKGLRQTYPSTAFILTQQHEVKIIETVLGKIEAVERYEYDMINESWKNSHSAVDKAPPFEENRMREHVTENQSRLYKRLAASLDQKAAAKRWERMVIAGDKETADILDQHMNKPIHSKIQKNLLNENEHKVIEHLIKEA</sequence>
<feature type="chain" id="PRO_0000360171" description="Uncharacterized protein YocB">
    <location>
        <begin position="1"/>
        <end position="260"/>
    </location>
</feature>
<protein>
    <recommendedName>
        <fullName>Uncharacterized protein YocB</fullName>
    </recommendedName>
</protein>